<organism>
    <name type="scientific">Listeria welshimeri serovar 6b (strain ATCC 35897 / DSM 20650 / CCUG 15529 / CIP 8149 / NCTC 11857 / SLCC 5334 / V8)</name>
    <dbReference type="NCBI Taxonomy" id="386043"/>
    <lineage>
        <taxon>Bacteria</taxon>
        <taxon>Bacillati</taxon>
        <taxon>Bacillota</taxon>
        <taxon>Bacilli</taxon>
        <taxon>Bacillales</taxon>
        <taxon>Listeriaceae</taxon>
        <taxon>Listeria</taxon>
    </lineage>
</organism>
<comment type="function">
    <text evidence="1">Involved in transcription antitermination. Required for transcription of ribosomal RNA (rRNA) genes. Binds specifically to the boxA antiterminator sequence of the ribosomal RNA (rrn) operons.</text>
</comment>
<comment type="similarity">
    <text evidence="1">Belongs to the NusB family.</text>
</comment>
<accession>A0AIG0</accession>
<evidence type="ECO:0000255" key="1">
    <source>
        <dbReference type="HAMAP-Rule" id="MF_00073"/>
    </source>
</evidence>
<feature type="chain" id="PRO_1000023745" description="Transcription antitermination protein NusB">
    <location>
        <begin position="1"/>
        <end position="128"/>
    </location>
</feature>
<name>NUSB_LISW6</name>
<keyword id="KW-0694">RNA-binding</keyword>
<keyword id="KW-0804">Transcription</keyword>
<keyword id="KW-0889">Transcription antitermination</keyword>
<keyword id="KW-0805">Transcription regulation</keyword>
<proteinExistence type="inferred from homology"/>
<reference key="1">
    <citation type="journal article" date="2006" name="J. Bacteriol.">
        <title>Whole-genome sequence of Listeria welshimeri reveals common steps in genome reduction with Listeria innocua as compared to Listeria monocytogenes.</title>
        <authorList>
            <person name="Hain T."/>
            <person name="Steinweg C."/>
            <person name="Kuenne C.T."/>
            <person name="Billion A."/>
            <person name="Ghai R."/>
            <person name="Chatterjee S.S."/>
            <person name="Domann E."/>
            <person name="Kaerst U."/>
            <person name="Goesmann A."/>
            <person name="Bekel T."/>
            <person name="Bartels D."/>
            <person name="Kaiser O."/>
            <person name="Meyer F."/>
            <person name="Puehler A."/>
            <person name="Weisshaar B."/>
            <person name="Wehland J."/>
            <person name="Liang C."/>
            <person name="Dandekar T."/>
            <person name="Lampidis R."/>
            <person name="Kreft J."/>
            <person name="Goebel W."/>
            <person name="Chakraborty T."/>
        </authorList>
    </citation>
    <scope>NUCLEOTIDE SEQUENCE [LARGE SCALE GENOMIC DNA]</scope>
    <source>
        <strain>ATCC 35897 / DSM 20650 / CCUG 15529 / CIP 8149 / NCTC 11857 / SLCC 5334 / V8</strain>
    </source>
</reference>
<dbReference type="EMBL" id="AM263198">
    <property type="protein sequence ID" value="CAK20792.1"/>
    <property type="molecule type" value="Genomic_DNA"/>
</dbReference>
<dbReference type="RefSeq" id="WP_011702173.1">
    <property type="nucleotide sequence ID" value="NC_008555.1"/>
</dbReference>
<dbReference type="SMR" id="A0AIG0"/>
<dbReference type="STRING" id="386043.lwe1374"/>
<dbReference type="GeneID" id="61189250"/>
<dbReference type="KEGG" id="lwe:lwe1374"/>
<dbReference type="eggNOG" id="COG0781">
    <property type="taxonomic scope" value="Bacteria"/>
</dbReference>
<dbReference type="HOGENOM" id="CLU_087843_3_1_9"/>
<dbReference type="OrthoDB" id="9811381at2"/>
<dbReference type="Proteomes" id="UP000000779">
    <property type="component" value="Chromosome"/>
</dbReference>
<dbReference type="GO" id="GO:0005829">
    <property type="term" value="C:cytosol"/>
    <property type="evidence" value="ECO:0007669"/>
    <property type="project" value="TreeGrafter"/>
</dbReference>
<dbReference type="GO" id="GO:0003723">
    <property type="term" value="F:RNA binding"/>
    <property type="evidence" value="ECO:0007669"/>
    <property type="project" value="UniProtKB-UniRule"/>
</dbReference>
<dbReference type="GO" id="GO:0006353">
    <property type="term" value="P:DNA-templated transcription termination"/>
    <property type="evidence" value="ECO:0007669"/>
    <property type="project" value="UniProtKB-UniRule"/>
</dbReference>
<dbReference type="GO" id="GO:0031564">
    <property type="term" value="P:transcription antitermination"/>
    <property type="evidence" value="ECO:0007669"/>
    <property type="project" value="UniProtKB-KW"/>
</dbReference>
<dbReference type="CDD" id="cd00619">
    <property type="entry name" value="Terminator_NusB"/>
    <property type="match status" value="1"/>
</dbReference>
<dbReference type="FunFam" id="1.10.940.10:FF:000003">
    <property type="entry name" value="Transcription antitermination factor NusB"/>
    <property type="match status" value="1"/>
</dbReference>
<dbReference type="Gene3D" id="1.10.940.10">
    <property type="entry name" value="NusB-like"/>
    <property type="match status" value="1"/>
</dbReference>
<dbReference type="HAMAP" id="MF_00073">
    <property type="entry name" value="NusB"/>
    <property type="match status" value="1"/>
</dbReference>
<dbReference type="InterPro" id="IPR035926">
    <property type="entry name" value="NusB-like_sf"/>
</dbReference>
<dbReference type="InterPro" id="IPR011605">
    <property type="entry name" value="NusB_fam"/>
</dbReference>
<dbReference type="InterPro" id="IPR006027">
    <property type="entry name" value="NusB_RsmB_TIM44"/>
</dbReference>
<dbReference type="NCBIfam" id="TIGR01951">
    <property type="entry name" value="nusB"/>
    <property type="match status" value="1"/>
</dbReference>
<dbReference type="NCBIfam" id="NF001223">
    <property type="entry name" value="PRK00202.1-1"/>
    <property type="match status" value="1"/>
</dbReference>
<dbReference type="PANTHER" id="PTHR11078:SF3">
    <property type="entry name" value="ANTITERMINATION NUSB DOMAIN-CONTAINING PROTEIN"/>
    <property type="match status" value="1"/>
</dbReference>
<dbReference type="PANTHER" id="PTHR11078">
    <property type="entry name" value="N UTILIZATION SUBSTANCE PROTEIN B-RELATED"/>
    <property type="match status" value="1"/>
</dbReference>
<dbReference type="Pfam" id="PF01029">
    <property type="entry name" value="NusB"/>
    <property type="match status" value="1"/>
</dbReference>
<dbReference type="SUPFAM" id="SSF48013">
    <property type="entry name" value="NusB-like"/>
    <property type="match status" value="1"/>
</dbReference>
<protein>
    <recommendedName>
        <fullName evidence="1">Transcription antitermination protein NusB</fullName>
    </recommendedName>
    <alternativeName>
        <fullName evidence="1">Antitermination factor NusB</fullName>
    </alternativeName>
</protein>
<sequence>MKRREAREKALQALFQIELNEMSLDQAIKNIMEDEQDDYMEKLVEGVMANKAEIDAIIEPNLDNWRMDRLSKVDLSLLRLSVYEINYLDDVPNRVSLNESIEIAKIYSDEKSSKFINGVLANIAPEDK</sequence>
<gene>
    <name evidence="1" type="primary">nusB</name>
    <name type="ordered locus">lwe1374</name>
</gene>